<reference key="1">
    <citation type="journal article" date="2009" name="J. Bacteriol.">
        <title>Genome sequences of three Agrobacterium biovars help elucidate the evolution of multichromosome genomes in bacteria.</title>
        <authorList>
            <person name="Slater S.C."/>
            <person name="Goldman B.S."/>
            <person name="Goodner B."/>
            <person name="Setubal J.C."/>
            <person name="Farrand S.K."/>
            <person name="Nester E.W."/>
            <person name="Burr T.J."/>
            <person name="Banta L."/>
            <person name="Dickerman A.W."/>
            <person name="Paulsen I."/>
            <person name="Otten L."/>
            <person name="Suen G."/>
            <person name="Welch R."/>
            <person name="Almeida N.F."/>
            <person name="Arnold F."/>
            <person name="Burton O.T."/>
            <person name="Du Z."/>
            <person name="Ewing A."/>
            <person name="Godsy E."/>
            <person name="Heisel S."/>
            <person name="Houmiel K.L."/>
            <person name="Jhaveri J."/>
            <person name="Lu J."/>
            <person name="Miller N.M."/>
            <person name="Norton S."/>
            <person name="Chen Q."/>
            <person name="Phoolcharoen W."/>
            <person name="Ohlin V."/>
            <person name="Ondrusek D."/>
            <person name="Pride N."/>
            <person name="Stricklin S.L."/>
            <person name="Sun J."/>
            <person name="Wheeler C."/>
            <person name="Wilson L."/>
            <person name="Zhu H."/>
            <person name="Wood D.W."/>
        </authorList>
    </citation>
    <scope>NUCLEOTIDE SEQUENCE [LARGE SCALE GENOMIC DNA]</scope>
    <source>
        <strain>K84 / ATCC BAA-868</strain>
    </source>
</reference>
<name>RF1_RHIR8</name>
<accession>B9JB75</accession>
<organism>
    <name type="scientific">Rhizobium rhizogenes (strain K84 / ATCC BAA-868)</name>
    <name type="common">Agrobacterium radiobacter</name>
    <dbReference type="NCBI Taxonomy" id="311403"/>
    <lineage>
        <taxon>Bacteria</taxon>
        <taxon>Pseudomonadati</taxon>
        <taxon>Pseudomonadota</taxon>
        <taxon>Alphaproteobacteria</taxon>
        <taxon>Hyphomicrobiales</taxon>
        <taxon>Rhizobiaceae</taxon>
        <taxon>Rhizobium/Agrobacterium group</taxon>
        <taxon>Rhizobium</taxon>
    </lineage>
</organism>
<feature type="chain" id="PRO_1000193463" description="Peptide chain release factor 1">
    <location>
        <begin position="1"/>
        <end position="359"/>
    </location>
</feature>
<feature type="region of interest" description="Disordered" evidence="2">
    <location>
        <begin position="282"/>
        <end position="306"/>
    </location>
</feature>
<feature type="modified residue" description="N5-methylglutamine" evidence="1">
    <location>
        <position position="235"/>
    </location>
</feature>
<proteinExistence type="inferred from homology"/>
<sequence length="359" mass="39854">MANLPIEKMRELERRFGEIEARMSAGPAADVYVKLASEYSELQPVVAKIRDYEKAIAEASDLEAMLADKSVDREMRDLADMELPEVKERIEVLEQDIQILLLPKDAADEKSAILEIRAGTGGSEAALFGGDLFRMYERFAANNGWKVEILSASDGEAGGYKEVIATITGKGVFSRLKFESGVHRVQRVPETEAGGRIHTSAATVAVLPEAEEIDIEIRAEDIRIDTMRSSGAGGQHVNTTDSAVRITHLPSGIVVTSSEKSQHQNRAKAMQVLRSRLFDMERQRADSERSADRKSQVGSGDRSERIRTYNFPQGRVTDHRINLTLYKLDRMMEGEIDEVVDALRADYQASQLAQLGEQA</sequence>
<comment type="function">
    <text evidence="1">Peptide chain release factor 1 directs the termination of translation in response to the peptide chain termination codons UAG and UAA.</text>
</comment>
<comment type="subcellular location">
    <subcellularLocation>
        <location evidence="1">Cytoplasm</location>
    </subcellularLocation>
</comment>
<comment type="PTM">
    <text evidence="1">Methylated by PrmC. Methylation increases the termination efficiency of RF1.</text>
</comment>
<comment type="similarity">
    <text evidence="1">Belongs to the prokaryotic/mitochondrial release factor family.</text>
</comment>
<protein>
    <recommendedName>
        <fullName evidence="1">Peptide chain release factor 1</fullName>
        <shortName evidence="1">RF-1</shortName>
    </recommendedName>
</protein>
<evidence type="ECO:0000255" key="1">
    <source>
        <dbReference type="HAMAP-Rule" id="MF_00093"/>
    </source>
</evidence>
<evidence type="ECO:0000256" key="2">
    <source>
        <dbReference type="SAM" id="MobiDB-lite"/>
    </source>
</evidence>
<gene>
    <name evidence="1" type="primary">prfA</name>
    <name type="ordered locus">Arad_4128</name>
</gene>
<dbReference type="EMBL" id="CP000628">
    <property type="protein sequence ID" value="ACM27907.1"/>
    <property type="molecule type" value="Genomic_DNA"/>
</dbReference>
<dbReference type="RefSeq" id="WP_012652532.1">
    <property type="nucleotide sequence ID" value="NC_011985.1"/>
</dbReference>
<dbReference type="SMR" id="B9JB75"/>
<dbReference type="STRING" id="311403.Arad_4128"/>
<dbReference type="KEGG" id="ara:Arad_4128"/>
<dbReference type="eggNOG" id="COG0216">
    <property type="taxonomic scope" value="Bacteria"/>
</dbReference>
<dbReference type="HOGENOM" id="CLU_036856_0_1_5"/>
<dbReference type="Proteomes" id="UP000001600">
    <property type="component" value="Chromosome 1"/>
</dbReference>
<dbReference type="GO" id="GO:0005737">
    <property type="term" value="C:cytoplasm"/>
    <property type="evidence" value="ECO:0007669"/>
    <property type="project" value="UniProtKB-SubCell"/>
</dbReference>
<dbReference type="GO" id="GO:0016149">
    <property type="term" value="F:translation release factor activity, codon specific"/>
    <property type="evidence" value="ECO:0007669"/>
    <property type="project" value="UniProtKB-UniRule"/>
</dbReference>
<dbReference type="FunFam" id="3.30.160.20:FF:000004">
    <property type="entry name" value="Peptide chain release factor 1"/>
    <property type="match status" value="1"/>
</dbReference>
<dbReference type="FunFam" id="3.30.70.1660:FF:000002">
    <property type="entry name" value="Peptide chain release factor 1"/>
    <property type="match status" value="1"/>
</dbReference>
<dbReference type="FunFam" id="3.30.70.1660:FF:000004">
    <property type="entry name" value="Peptide chain release factor 1"/>
    <property type="match status" value="1"/>
</dbReference>
<dbReference type="Gene3D" id="3.30.160.20">
    <property type="match status" value="1"/>
</dbReference>
<dbReference type="Gene3D" id="3.30.70.1660">
    <property type="match status" value="2"/>
</dbReference>
<dbReference type="Gene3D" id="6.10.140.1950">
    <property type="match status" value="1"/>
</dbReference>
<dbReference type="HAMAP" id="MF_00093">
    <property type="entry name" value="Rel_fac_1"/>
    <property type="match status" value="1"/>
</dbReference>
<dbReference type="InterPro" id="IPR005139">
    <property type="entry name" value="PCRF"/>
</dbReference>
<dbReference type="InterPro" id="IPR000352">
    <property type="entry name" value="Pep_chain_release_fac_I"/>
</dbReference>
<dbReference type="InterPro" id="IPR045853">
    <property type="entry name" value="Pep_chain_release_fac_I_sf"/>
</dbReference>
<dbReference type="InterPro" id="IPR050057">
    <property type="entry name" value="Prokaryotic/Mito_RF"/>
</dbReference>
<dbReference type="InterPro" id="IPR004373">
    <property type="entry name" value="RF-1"/>
</dbReference>
<dbReference type="NCBIfam" id="TIGR00019">
    <property type="entry name" value="prfA"/>
    <property type="match status" value="1"/>
</dbReference>
<dbReference type="NCBIfam" id="NF001859">
    <property type="entry name" value="PRK00591.1"/>
    <property type="match status" value="1"/>
</dbReference>
<dbReference type="PANTHER" id="PTHR43804">
    <property type="entry name" value="LD18447P"/>
    <property type="match status" value="1"/>
</dbReference>
<dbReference type="PANTHER" id="PTHR43804:SF7">
    <property type="entry name" value="LD18447P"/>
    <property type="match status" value="1"/>
</dbReference>
<dbReference type="Pfam" id="PF03462">
    <property type="entry name" value="PCRF"/>
    <property type="match status" value="1"/>
</dbReference>
<dbReference type="Pfam" id="PF00472">
    <property type="entry name" value="RF-1"/>
    <property type="match status" value="1"/>
</dbReference>
<dbReference type="SMART" id="SM00937">
    <property type="entry name" value="PCRF"/>
    <property type="match status" value="1"/>
</dbReference>
<dbReference type="SUPFAM" id="SSF75620">
    <property type="entry name" value="Release factor"/>
    <property type="match status" value="1"/>
</dbReference>
<dbReference type="PROSITE" id="PS00745">
    <property type="entry name" value="RF_PROK_I"/>
    <property type="match status" value="1"/>
</dbReference>
<keyword id="KW-0963">Cytoplasm</keyword>
<keyword id="KW-0488">Methylation</keyword>
<keyword id="KW-0648">Protein biosynthesis</keyword>